<protein>
    <recommendedName>
        <fullName evidence="3">Chassatide C1</fullName>
    </recommendedName>
    <alternativeName>
        <fullName evidence="3">Cyclotide chaC1</fullName>
    </alternativeName>
</protein>
<name>CYC1_CHACT</name>
<accession>C0HKH4</accession>
<proteinExistence type="evidence at protein level"/>
<evidence type="ECO:0000255" key="1">
    <source>
        <dbReference type="PROSITE-ProRule" id="PRU00395"/>
    </source>
</evidence>
<evidence type="ECO:0000269" key="2">
    <source>
    </source>
</evidence>
<evidence type="ECO:0000303" key="3">
    <source>
    </source>
</evidence>
<evidence type="ECO:0000305" key="4"/>
<sequence length="29" mass="3016">GDACGETCFTGICFTAGCSCNPWPTCTRN</sequence>
<feature type="peptide" id="PRO_0000440219" description="Chassatide C1" evidence="2">
    <location>
        <begin position="1"/>
        <end position="29"/>
    </location>
</feature>
<feature type="disulfide bond" evidence="1">
    <location>
        <begin position="4"/>
        <end position="18"/>
    </location>
</feature>
<feature type="disulfide bond" evidence="1">
    <location>
        <begin position="8"/>
        <end position="20"/>
    </location>
</feature>
<feature type="disulfide bond" evidence="1">
    <location>
        <begin position="13"/>
        <end position="26"/>
    </location>
</feature>
<feature type="cross-link" description="Cyclopeptide (Gly-Asn)" evidence="2">
    <location>
        <begin position="1"/>
        <end position="29"/>
    </location>
</feature>
<comment type="function">
    <text evidence="1">Probably participates in a plant defense mechanism.</text>
</comment>
<comment type="tissue specificity">
    <text evidence="2">Expressed in leaf, fruit, pedical and stem but not in root (at protein level).</text>
</comment>
<comment type="domain">
    <text evidence="4">The presence of a 'disulfide through disulfide knot' structurally defines this protein as a knottin.</text>
</comment>
<comment type="PTM">
    <text evidence="1 2">This is a cyclic peptide.</text>
</comment>
<comment type="mass spectrometry" mass="2990.0" method="MALDI" evidence="2"/>
<comment type="similarity">
    <text evidence="3">Belongs to the cyclotide family. Moebius subfamily.</text>
</comment>
<comment type="caution">
    <text evidence="4">This peptide is cyclic. The start position was chosen by similarity to chassatide C4 for which the DNA sequence is known.</text>
</comment>
<dbReference type="SMR" id="C0HKH4"/>
<dbReference type="GO" id="GO:0006952">
    <property type="term" value="P:defense response"/>
    <property type="evidence" value="ECO:0007669"/>
    <property type="project" value="UniProtKB-KW"/>
</dbReference>
<dbReference type="InterPro" id="IPR005535">
    <property type="entry name" value="Cyclotide"/>
</dbReference>
<dbReference type="InterPro" id="IPR036146">
    <property type="entry name" value="Cyclotide_sf"/>
</dbReference>
<dbReference type="Pfam" id="PF03784">
    <property type="entry name" value="Cyclotide"/>
    <property type="match status" value="1"/>
</dbReference>
<dbReference type="SUPFAM" id="SSF57038">
    <property type="entry name" value="Cyclotides"/>
    <property type="match status" value="1"/>
</dbReference>
<keyword id="KW-0903">Direct protein sequencing</keyword>
<keyword id="KW-1015">Disulfide bond</keyword>
<keyword id="KW-0960">Knottin</keyword>
<keyword id="KW-0611">Plant defense</keyword>
<reference evidence="4" key="1">
    <citation type="journal article" date="2012" name="J. Biol. Chem.">
        <title>Novel Cyclotides and Uncyclotides with Highly Shortened Precursors from Chassalia chartacea and Effects of Methionine Oxidation on Bioactivities.</title>
        <authorList>
            <person name="Nguyen G.K."/>
            <person name="Lim W.H."/>
            <person name="Nguyen P.Q."/>
            <person name="Tam J.P."/>
        </authorList>
    </citation>
    <scope>PROTEIN SEQUENCE</scope>
    <scope>TISSUE SPECIFICITY</scope>
    <scope>MASS SPECTROMETRY</scope>
    <scope>IDENTIFICATION BY MASS SPECTROMETRY</scope>
</reference>
<organism evidence="3">
    <name type="scientific">Chassalia chartacea</name>
    <name type="common">Chassalia curviflora</name>
    <dbReference type="NCBI Taxonomy" id="510798"/>
    <lineage>
        <taxon>Eukaryota</taxon>
        <taxon>Viridiplantae</taxon>
        <taxon>Streptophyta</taxon>
        <taxon>Embryophyta</taxon>
        <taxon>Tracheophyta</taxon>
        <taxon>Spermatophyta</taxon>
        <taxon>Magnoliopsida</taxon>
        <taxon>eudicotyledons</taxon>
        <taxon>Gunneridae</taxon>
        <taxon>Pentapetalae</taxon>
        <taxon>asterids</taxon>
        <taxon>lamiids</taxon>
        <taxon>Gentianales</taxon>
        <taxon>Rubiaceae</taxon>
        <taxon>Rubioideae</taxon>
        <taxon>Palicoureeae</taxon>
        <taxon>Chassalia</taxon>
    </lineage>
</organism>